<evidence type="ECO:0000255" key="1">
    <source>
        <dbReference type="HAMAP-Rule" id="MF_00503"/>
    </source>
</evidence>
<evidence type="ECO:0000305" key="2"/>
<name>RL9_CITK8</name>
<sequence>MQVILLDKVANLGSLGDQVNVKAGYARNFLVPQGKAVPATKKNVEFFEARRAELEAKLADVLAAANARAEKINALETVTIASKAGDEGKLFGSIGTRDIADAVTAAGVEVAKSEVRLPNGVLRTTGEHEVNFQVHSEVFAKLTVNVVAE</sequence>
<keyword id="KW-1185">Reference proteome</keyword>
<keyword id="KW-0687">Ribonucleoprotein</keyword>
<keyword id="KW-0689">Ribosomal protein</keyword>
<keyword id="KW-0694">RNA-binding</keyword>
<keyword id="KW-0699">rRNA-binding</keyword>
<gene>
    <name evidence="1" type="primary">rplI</name>
    <name type="ordered locus">CKO_03629</name>
</gene>
<protein>
    <recommendedName>
        <fullName evidence="1">Large ribosomal subunit protein bL9</fullName>
    </recommendedName>
    <alternativeName>
        <fullName evidence="2">50S ribosomal protein L9</fullName>
    </alternativeName>
</protein>
<organism>
    <name type="scientific">Citrobacter koseri (strain ATCC BAA-895 / CDC 4225-83 / SGSC4696)</name>
    <dbReference type="NCBI Taxonomy" id="290338"/>
    <lineage>
        <taxon>Bacteria</taxon>
        <taxon>Pseudomonadati</taxon>
        <taxon>Pseudomonadota</taxon>
        <taxon>Gammaproteobacteria</taxon>
        <taxon>Enterobacterales</taxon>
        <taxon>Enterobacteriaceae</taxon>
        <taxon>Citrobacter</taxon>
    </lineage>
</organism>
<proteinExistence type="inferred from homology"/>
<feature type="chain" id="PRO_1000014765" description="Large ribosomal subunit protein bL9">
    <location>
        <begin position="1"/>
        <end position="149"/>
    </location>
</feature>
<reference key="1">
    <citation type="submission" date="2007-08" db="EMBL/GenBank/DDBJ databases">
        <authorList>
            <consortium name="The Citrobacter koseri Genome Sequencing Project"/>
            <person name="McClelland M."/>
            <person name="Sanderson E.K."/>
            <person name="Porwollik S."/>
            <person name="Spieth J."/>
            <person name="Clifton W.S."/>
            <person name="Latreille P."/>
            <person name="Courtney L."/>
            <person name="Wang C."/>
            <person name="Pepin K."/>
            <person name="Bhonagiri V."/>
            <person name="Nash W."/>
            <person name="Johnson M."/>
            <person name="Thiruvilangam P."/>
            <person name="Wilson R."/>
        </authorList>
    </citation>
    <scope>NUCLEOTIDE SEQUENCE [LARGE SCALE GENOMIC DNA]</scope>
    <source>
        <strain>ATCC BAA-895 / CDC 4225-83 / SGSC4696</strain>
    </source>
</reference>
<dbReference type="EMBL" id="CP000822">
    <property type="protein sequence ID" value="ABV14708.1"/>
    <property type="molecule type" value="Genomic_DNA"/>
</dbReference>
<dbReference type="RefSeq" id="WP_012134405.1">
    <property type="nucleotide sequence ID" value="NC_009792.1"/>
</dbReference>
<dbReference type="SMR" id="A8AMJ4"/>
<dbReference type="STRING" id="290338.CKO_03629"/>
<dbReference type="GeneID" id="45137342"/>
<dbReference type="KEGG" id="cko:CKO_03629"/>
<dbReference type="HOGENOM" id="CLU_078938_4_1_6"/>
<dbReference type="OrthoDB" id="9788336at2"/>
<dbReference type="Proteomes" id="UP000008148">
    <property type="component" value="Chromosome"/>
</dbReference>
<dbReference type="GO" id="GO:1990904">
    <property type="term" value="C:ribonucleoprotein complex"/>
    <property type="evidence" value="ECO:0007669"/>
    <property type="project" value="UniProtKB-KW"/>
</dbReference>
<dbReference type="GO" id="GO:0005840">
    <property type="term" value="C:ribosome"/>
    <property type="evidence" value="ECO:0007669"/>
    <property type="project" value="UniProtKB-KW"/>
</dbReference>
<dbReference type="GO" id="GO:0019843">
    <property type="term" value="F:rRNA binding"/>
    <property type="evidence" value="ECO:0007669"/>
    <property type="project" value="UniProtKB-UniRule"/>
</dbReference>
<dbReference type="GO" id="GO:0003735">
    <property type="term" value="F:structural constituent of ribosome"/>
    <property type="evidence" value="ECO:0007669"/>
    <property type="project" value="InterPro"/>
</dbReference>
<dbReference type="GO" id="GO:0006412">
    <property type="term" value="P:translation"/>
    <property type="evidence" value="ECO:0007669"/>
    <property type="project" value="UniProtKB-UniRule"/>
</dbReference>
<dbReference type="FunFam" id="3.10.430.100:FF:000001">
    <property type="entry name" value="50S ribosomal protein L9"/>
    <property type="match status" value="1"/>
</dbReference>
<dbReference type="FunFam" id="3.40.5.10:FF:000001">
    <property type="entry name" value="50S ribosomal protein L9"/>
    <property type="match status" value="1"/>
</dbReference>
<dbReference type="Gene3D" id="3.10.430.100">
    <property type="entry name" value="Ribosomal protein L9, C-terminal domain"/>
    <property type="match status" value="1"/>
</dbReference>
<dbReference type="Gene3D" id="3.40.5.10">
    <property type="entry name" value="Ribosomal protein L9, N-terminal domain"/>
    <property type="match status" value="1"/>
</dbReference>
<dbReference type="HAMAP" id="MF_00503">
    <property type="entry name" value="Ribosomal_bL9"/>
    <property type="match status" value="1"/>
</dbReference>
<dbReference type="InterPro" id="IPR000244">
    <property type="entry name" value="Ribosomal_bL9"/>
</dbReference>
<dbReference type="InterPro" id="IPR009027">
    <property type="entry name" value="Ribosomal_bL9/RNase_H1_N"/>
</dbReference>
<dbReference type="InterPro" id="IPR020594">
    <property type="entry name" value="Ribosomal_bL9_bac/chp"/>
</dbReference>
<dbReference type="InterPro" id="IPR020069">
    <property type="entry name" value="Ribosomal_bL9_C"/>
</dbReference>
<dbReference type="InterPro" id="IPR036791">
    <property type="entry name" value="Ribosomal_bL9_C_sf"/>
</dbReference>
<dbReference type="InterPro" id="IPR020070">
    <property type="entry name" value="Ribosomal_bL9_N"/>
</dbReference>
<dbReference type="InterPro" id="IPR036935">
    <property type="entry name" value="Ribosomal_bL9_N_sf"/>
</dbReference>
<dbReference type="NCBIfam" id="TIGR00158">
    <property type="entry name" value="L9"/>
    <property type="match status" value="1"/>
</dbReference>
<dbReference type="PANTHER" id="PTHR21368">
    <property type="entry name" value="50S RIBOSOMAL PROTEIN L9"/>
    <property type="match status" value="1"/>
</dbReference>
<dbReference type="Pfam" id="PF03948">
    <property type="entry name" value="Ribosomal_L9_C"/>
    <property type="match status" value="1"/>
</dbReference>
<dbReference type="Pfam" id="PF01281">
    <property type="entry name" value="Ribosomal_L9_N"/>
    <property type="match status" value="1"/>
</dbReference>
<dbReference type="SUPFAM" id="SSF55658">
    <property type="entry name" value="L9 N-domain-like"/>
    <property type="match status" value="1"/>
</dbReference>
<dbReference type="SUPFAM" id="SSF55653">
    <property type="entry name" value="Ribosomal protein L9 C-domain"/>
    <property type="match status" value="1"/>
</dbReference>
<dbReference type="PROSITE" id="PS00651">
    <property type="entry name" value="RIBOSOMAL_L9"/>
    <property type="match status" value="1"/>
</dbReference>
<accession>A8AMJ4</accession>
<comment type="function">
    <text evidence="1">Binds to the 23S rRNA.</text>
</comment>
<comment type="similarity">
    <text evidence="1">Belongs to the bacterial ribosomal protein bL9 family.</text>
</comment>